<evidence type="ECO:0000255" key="1">
    <source>
        <dbReference type="HAMAP-Rule" id="MF_00823"/>
    </source>
</evidence>
<evidence type="ECO:0000255" key="2">
    <source>
        <dbReference type="PROSITE-ProRule" id="PRU01137"/>
    </source>
</evidence>
<name>ACCA_RIPO1</name>
<protein>
    <recommendedName>
        <fullName evidence="1">Acetyl-coenzyme A carboxylase carboxyl transferase subunit alpha</fullName>
        <shortName evidence="1">ACCase subunit alpha</shortName>
        <shortName evidence="1">Acetyl-CoA carboxylase carboxyltransferase subunit alpha</shortName>
        <ecNumber evidence="1">2.1.3.15</ecNumber>
    </recommendedName>
</protein>
<organism>
    <name type="scientific">Rippkaea orientalis (strain PCC 8801 / RF-1)</name>
    <name type="common">Cyanothece sp. (strain PCC 8801)</name>
    <dbReference type="NCBI Taxonomy" id="41431"/>
    <lineage>
        <taxon>Bacteria</taxon>
        <taxon>Bacillati</taxon>
        <taxon>Cyanobacteriota</taxon>
        <taxon>Cyanophyceae</taxon>
        <taxon>Oscillatoriophycideae</taxon>
        <taxon>Chroococcales</taxon>
        <taxon>Aphanothecaceae</taxon>
        <taxon>Rippkaea</taxon>
        <taxon>Rippkaea orientalis</taxon>
    </lineage>
</organism>
<gene>
    <name evidence="1" type="primary">accA</name>
    <name type="ordered locus">PCC8801_0910</name>
</gene>
<accession>B7JZP4</accession>
<dbReference type="EC" id="2.1.3.15" evidence="1"/>
<dbReference type="EMBL" id="CP001287">
    <property type="protein sequence ID" value="ACK64987.1"/>
    <property type="molecule type" value="Genomic_DNA"/>
</dbReference>
<dbReference type="RefSeq" id="WP_012594262.1">
    <property type="nucleotide sequence ID" value="NC_011726.1"/>
</dbReference>
<dbReference type="SMR" id="B7JZP4"/>
<dbReference type="STRING" id="41431.PCC8801_0910"/>
<dbReference type="KEGG" id="cyp:PCC8801_0910"/>
<dbReference type="eggNOG" id="COG0825">
    <property type="taxonomic scope" value="Bacteria"/>
</dbReference>
<dbReference type="HOGENOM" id="CLU_015486_0_2_3"/>
<dbReference type="OrthoDB" id="9808023at2"/>
<dbReference type="UniPathway" id="UPA00655">
    <property type="reaction ID" value="UER00711"/>
</dbReference>
<dbReference type="Proteomes" id="UP000008204">
    <property type="component" value="Chromosome"/>
</dbReference>
<dbReference type="GO" id="GO:0009317">
    <property type="term" value="C:acetyl-CoA carboxylase complex"/>
    <property type="evidence" value="ECO:0007669"/>
    <property type="project" value="InterPro"/>
</dbReference>
<dbReference type="GO" id="GO:0003989">
    <property type="term" value="F:acetyl-CoA carboxylase activity"/>
    <property type="evidence" value="ECO:0007669"/>
    <property type="project" value="InterPro"/>
</dbReference>
<dbReference type="GO" id="GO:0005524">
    <property type="term" value="F:ATP binding"/>
    <property type="evidence" value="ECO:0007669"/>
    <property type="project" value="UniProtKB-KW"/>
</dbReference>
<dbReference type="GO" id="GO:0016743">
    <property type="term" value="F:carboxyl- or carbamoyltransferase activity"/>
    <property type="evidence" value="ECO:0007669"/>
    <property type="project" value="UniProtKB-UniRule"/>
</dbReference>
<dbReference type="GO" id="GO:0006633">
    <property type="term" value="P:fatty acid biosynthetic process"/>
    <property type="evidence" value="ECO:0007669"/>
    <property type="project" value="UniProtKB-KW"/>
</dbReference>
<dbReference type="GO" id="GO:2001295">
    <property type="term" value="P:malonyl-CoA biosynthetic process"/>
    <property type="evidence" value="ECO:0007669"/>
    <property type="project" value="UniProtKB-UniRule"/>
</dbReference>
<dbReference type="Gene3D" id="3.90.226.10">
    <property type="entry name" value="2-enoyl-CoA Hydratase, Chain A, domain 1"/>
    <property type="match status" value="1"/>
</dbReference>
<dbReference type="HAMAP" id="MF_00823">
    <property type="entry name" value="AcetylCoA_CT_alpha"/>
    <property type="match status" value="1"/>
</dbReference>
<dbReference type="InterPro" id="IPR001095">
    <property type="entry name" value="Acetyl_CoA_COase_a_su"/>
</dbReference>
<dbReference type="InterPro" id="IPR029045">
    <property type="entry name" value="ClpP/crotonase-like_dom_sf"/>
</dbReference>
<dbReference type="InterPro" id="IPR011763">
    <property type="entry name" value="COA_CT_C"/>
</dbReference>
<dbReference type="NCBIfam" id="TIGR00513">
    <property type="entry name" value="accA"/>
    <property type="match status" value="1"/>
</dbReference>
<dbReference type="NCBIfam" id="NF041504">
    <property type="entry name" value="AccA_sub"/>
    <property type="match status" value="1"/>
</dbReference>
<dbReference type="NCBIfam" id="NF004344">
    <property type="entry name" value="PRK05724.1"/>
    <property type="match status" value="1"/>
</dbReference>
<dbReference type="PANTHER" id="PTHR42853">
    <property type="entry name" value="ACETYL-COENZYME A CARBOXYLASE CARBOXYL TRANSFERASE SUBUNIT ALPHA"/>
    <property type="match status" value="1"/>
</dbReference>
<dbReference type="PANTHER" id="PTHR42853:SF3">
    <property type="entry name" value="ACETYL-COENZYME A CARBOXYLASE CARBOXYL TRANSFERASE SUBUNIT ALPHA, CHLOROPLASTIC"/>
    <property type="match status" value="1"/>
</dbReference>
<dbReference type="Pfam" id="PF03255">
    <property type="entry name" value="ACCA"/>
    <property type="match status" value="1"/>
</dbReference>
<dbReference type="PRINTS" id="PR01069">
    <property type="entry name" value="ACCCTRFRASEA"/>
</dbReference>
<dbReference type="SUPFAM" id="SSF52096">
    <property type="entry name" value="ClpP/crotonase"/>
    <property type="match status" value="1"/>
</dbReference>
<dbReference type="PROSITE" id="PS50989">
    <property type="entry name" value="COA_CT_CTER"/>
    <property type="match status" value="1"/>
</dbReference>
<comment type="function">
    <text evidence="1">Component of the acetyl coenzyme A carboxylase (ACC) complex. First, biotin carboxylase catalyzes the carboxylation of biotin on its carrier protein (BCCP) and then the CO(2) group is transferred by the carboxyltransferase to acetyl-CoA to form malonyl-CoA.</text>
</comment>
<comment type="catalytic activity">
    <reaction evidence="1">
        <text>N(6)-carboxybiotinyl-L-lysyl-[protein] + acetyl-CoA = N(6)-biotinyl-L-lysyl-[protein] + malonyl-CoA</text>
        <dbReference type="Rhea" id="RHEA:54728"/>
        <dbReference type="Rhea" id="RHEA-COMP:10505"/>
        <dbReference type="Rhea" id="RHEA-COMP:10506"/>
        <dbReference type="ChEBI" id="CHEBI:57288"/>
        <dbReference type="ChEBI" id="CHEBI:57384"/>
        <dbReference type="ChEBI" id="CHEBI:83144"/>
        <dbReference type="ChEBI" id="CHEBI:83145"/>
        <dbReference type="EC" id="2.1.3.15"/>
    </reaction>
</comment>
<comment type="pathway">
    <text evidence="1">Lipid metabolism; malonyl-CoA biosynthesis; malonyl-CoA from acetyl-CoA: step 1/1.</text>
</comment>
<comment type="subunit">
    <text evidence="1">Acetyl-CoA carboxylase is a heterohexamer composed of biotin carboxyl carrier protein (AccB), biotin carboxylase (AccC) and two subunits each of ACCase subunit alpha (AccA) and ACCase subunit beta (AccD).</text>
</comment>
<comment type="subcellular location">
    <subcellularLocation>
        <location evidence="1">Cytoplasm</location>
    </subcellularLocation>
</comment>
<comment type="similarity">
    <text evidence="1">Belongs to the AccA family.</text>
</comment>
<sequence length="324" mass="36100">MSKNERRTFLLDFEKPLWELEARINQIRELAEENNVDVSEQIAQLERRAEELRQEIFSTLTPSQRLQLARHPRRPSTLDYIQAIADEWFELHGDRGGYDDPALVGGVARLGGRPVTILGEQKGRDTKDNVARNFGMASPGGYRKAMRLMERANQFNQPIITFIDTPGAWAGVEAEKLGQGEAIAYNLREMFRLDVPIICTVIGEGGSGGALGIGVGDRLLMLEHAVYMVATPEACAAILWKDAKKSPQAAMALKITSSDLKELGIIDEIVPEPSGAAHSKPLEAANLLKQTLIDTIDELSSLSPEQRRKLRYQKYRQIGVFFES</sequence>
<proteinExistence type="inferred from homology"/>
<reference key="1">
    <citation type="journal article" date="2011" name="MBio">
        <title>Novel metabolic attributes of the genus Cyanothece, comprising a group of unicellular nitrogen-fixing Cyanobacteria.</title>
        <authorList>
            <person name="Bandyopadhyay A."/>
            <person name="Elvitigala T."/>
            <person name="Welsh E."/>
            <person name="Stockel J."/>
            <person name="Liberton M."/>
            <person name="Min H."/>
            <person name="Sherman L.A."/>
            <person name="Pakrasi H.B."/>
        </authorList>
    </citation>
    <scope>NUCLEOTIDE SEQUENCE [LARGE SCALE GENOMIC DNA]</scope>
    <source>
        <strain>PCC 8801 / RF-1</strain>
    </source>
</reference>
<keyword id="KW-0067">ATP-binding</keyword>
<keyword id="KW-0963">Cytoplasm</keyword>
<keyword id="KW-0275">Fatty acid biosynthesis</keyword>
<keyword id="KW-0276">Fatty acid metabolism</keyword>
<keyword id="KW-0444">Lipid biosynthesis</keyword>
<keyword id="KW-0443">Lipid metabolism</keyword>
<keyword id="KW-0547">Nucleotide-binding</keyword>
<keyword id="KW-1185">Reference proteome</keyword>
<keyword id="KW-0808">Transferase</keyword>
<feature type="chain" id="PRO_1000134480" description="Acetyl-coenzyme A carboxylase carboxyl transferase subunit alpha">
    <location>
        <begin position="1"/>
        <end position="324"/>
    </location>
</feature>
<feature type="domain" description="CoA carboxyltransferase C-terminal" evidence="2">
    <location>
        <begin position="44"/>
        <end position="298"/>
    </location>
</feature>